<reference key="1">
    <citation type="journal article" date="1995" name="J. Bacteriol.">
        <title>Purification, characterization, and genetic analysis of Mycobacterium tuberculosis urease, a potentially critical determinant of host-pathogen interaction.</title>
        <authorList>
            <person name="Clemens D.L."/>
            <person name="Lee B.-Y."/>
            <person name="Horwitz M.A."/>
        </authorList>
    </citation>
    <scope>NUCLEOTIDE SEQUENCE [GENOMIC DNA]</scope>
    <source>
        <strain>ATCC 35801 / TMC 107 / Erdman</strain>
    </source>
</reference>
<reference key="2">
    <citation type="journal article" date="1998" name="Nature">
        <title>Deciphering the biology of Mycobacterium tuberculosis from the complete genome sequence.</title>
        <authorList>
            <person name="Cole S.T."/>
            <person name="Brosch R."/>
            <person name="Parkhill J."/>
            <person name="Garnier T."/>
            <person name="Churcher C.M."/>
            <person name="Harris D.E."/>
            <person name="Gordon S.V."/>
            <person name="Eiglmeier K."/>
            <person name="Gas S."/>
            <person name="Barry C.E. III"/>
            <person name="Tekaia F."/>
            <person name="Badcock K."/>
            <person name="Basham D."/>
            <person name="Brown D."/>
            <person name="Chillingworth T."/>
            <person name="Connor R."/>
            <person name="Davies R.M."/>
            <person name="Devlin K."/>
            <person name="Feltwell T."/>
            <person name="Gentles S."/>
            <person name="Hamlin N."/>
            <person name="Holroyd S."/>
            <person name="Hornsby T."/>
            <person name="Jagels K."/>
            <person name="Krogh A."/>
            <person name="McLean J."/>
            <person name="Moule S."/>
            <person name="Murphy L.D."/>
            <person name="Oliver S."/>
            <person name="Osborne J."/>
            <person name="Quail M.A."/>
            <person name="Rajandream M.A."/>
            <person name="Rogers J."/>
            <person name="Rutter S."/>
            <person name="Seeger K."/>
            <person name="Skelton S."/>
            <person name="Squares S."/>
            <person name="Squares R."/>
            <person name="Sulston J.E."/>
            <person name="Taylor K."/>
            <person name="Whitehead S."/>
            <person name="Barrell B.G."/>
        </authorList>
    </citation>
    <scope>NUCLEOTIDE SEQUENCE [LARGE SCALE GENOMIC DNA]</scope>
    <source>
        <strain>ATCC 25618 / H37Rv</strain>
    </source>
</reference>
<reference key="3">
    <citation type="journal article" date="2007" name="Biochemistry">
        <title>Biochemical studies on Mycobacterium tuberculosis UreG and comparative modeling reveal structural and functional conservation among the bacterial UreG family.</title>
        <authorList>
            <person name="Zambelli B."/>
            <person name="Musiani F."/>
            <person name="Savini M."/>
            <person name="Tucker P."/>
            <person name="Ciurli S."/>
        </authorList>
    </citation>
    <scope>PROTEIN SEQUENCE OF 171-186 AND 193-224</scope>
    <scope>SUBUNIT</scope>
    <scope>GTPASE ACTIVITY</scope>
    <scope>POSSIBLE DISULFIDE BOND</scope>
    <scope>MODELING</scope>
</reference>
<reference key="4">
    <citation type="journal article" date="2011" name="Mol. Cell. Proteomics">
        <title>Proteogenomic analysis of Mycobacterium tuberculosis by high resolution mass spectrometry.</title>
        <authorList>
            <person name="Kelkar D.S."/>
            <person name="Kumar D."/>
            <person name="Kumar P."/>
            <person name="Balakrishnan L."/>
            <person name="Muthusamy B."/>
            <person name="Yadav A.K."/>
            <person name="Shrivastava P."/>
            <person name="Marimuthu A."/>
            <person name="Anand S."/>
            <person name="Sundaram H."/>
            <person name="Kingsbury R."/>
            <person name="Harsha H.C."/>
            <person name="Nair B."/>
            <person name="Prasad T.S."/>
            <person name="Chauhan D.S."/>
            <person name="Katoch K."/>
            <person name="Katoch V.M."/>
            <person name="Kumar P."/>
            <person name="Chaerkady R."/>
            <person name="Ramachandran S."/>
            <person name="Dash D."/>
            <person name="Pandey A."/>
        </authorList>
    </citation>
    <scope>IDENTIFICATION BY MASS SPECTROMETRY [LARGE SCALE ANALYSIS]</scope>
    <source>
        <strain>ATCC 25618 / H37Rv</strain>
    </source>
</reference>
<name>UREG_MYCTU</name>
<accession>P9WFE3</accession>
<accession>L0T828</accession>
<accession>P0A664</accession>
<accession>P50051</accession>
<keyword id="KW-0143">Chaperone</keyword>
<keyword id="KW-0963">Cytoplasm</keyword>
<keyword id="KW-0903">Direct protein sequencing</keyword>
<keyword id="KW-1015">Disulfide bond</keyword>
<keyword id="KW-0342">GTP-binding</keyword>
<keyword id="KW-0996">Nickel insertion</keyword>
<keyword id="KW-0547">Nucleotide-binding</keyword>
<keyword id="KW-1185">Reference proteome</keyword>
<gene>
    <name evidence="3" type="primary">ureG</name>
    <name type="ordered locus">Rv1852</name>
    <name type="ORF">MTCY359.21c</name>
</gene>
<comment type="function">
    <text evidence="3">Facilitates the functional incorporation of the urease nickel metallocenter. This process requires GTP hydrolysis, probably effectuated by UreG.</text>
</comment>
<comment type="subunit">
    <text evidence="1 5">Homodimer; disulfide-linked (Probable). The physiological role of the disulfide bond has not been proven in vivo. UreD, UreF and UreG form a complex that acts as a GTP-hydrolysis-dependent molecular chaperone, activating the urease apoprotein by helping to assemble the nickel containing metallocenter of UreC. The UreE protein probably delivers the nickel (By similarity).</text>
</comment>
<comment type="subcellular location">
    <subcellularLocation>
        <location evidence="3">Cytoplasm</location>
    </subcellularLocation>
</comment>
<comment type="similarity">
    <text evidence="3">Belongs to the SIMIBI class G3E GTPase family. UreG subfamily.</text>
</comment>
<dbReference type="EMBL" id="U33011">
    <property type="protein sequence ID" value="AAC43477.1"/>
    <property type="molecule type" value="Genomic_DNA"/>
</dbReference>
<dbReference type="EMBL" id="AL123456">
    <property type="protein sequence ID" value="CCP44618.1"/>
    <property type="molecule type" value="Genomic_DNA"/>
</dbReference>
<dbReference type="PIR" id="D70665">
    <property type="entry name" value="D70665"/>
</dbReference>
<dbReference type="RefSeq" id="NP_216368.1">
    <property type="nucleotide sequence ID" value="NC_000962.3"/>
</dbReference>
<dbReference type="RefSeq" id="WP_003409313.1">
    <property type="nucleotide sequence ID" value="NZ_NVQJ01000013.1"/>
</dbReference>
<dbReference type="SMR" id="P9WFE3"/>
<dbReference type="FunCoup" id="P9WFE3">
    <property type="interactions" value="162"/>
</dbReference>
<dbReference type="STRING" id="83332.Rv1852"/>
<dbReference type="PaxDb" id="83332-Rv1852"/>
<dbReference type="DNASU" id="885729"/>
<dbReference type="GeneID" id="885729"/>
<dbReference type="KEGG" id="mtu:Rv1852"/>
<dbReference type="KEGG" id="mtv:RVBD_1852"/>
<dbReference type="TubercuList" id="Rv1852"/>
<dbReference type="eggNOG" id="COG0378">
    <property type="taxonomic scope" value="Bacteria"/>
</dbReference>
<dbReference type="InParanoid" id="P9WFE3"/>
<dbReference type="OrthoDB" id="9802035at2"/>
<dbReference type="PhylomeDB" id="P9WFE3"/>
<dbReference type="Proteomes" id="UP000001584">
    <property type="component" value="Chromosome"/>
</dbReference>
<dbReference type="GO" id="GO:0005737">
    <property type="term" value="C:cytoplasm"/>
    <property type="evidence" value="ECO:0007669"/>
    <property type="project" value="UniProtKB-SubCell"/>
</dbReference>
<dbReference type="GO" id="GO:0005525">
    <property type="term" value="F:GTP binding"/>
    <property type="evidence" value="ECO:0007669"/>
    <property type="project" value="UniProtKB-KW"/>
</dbReference>
<dbReference type="GO" id="GO:0003924">
    <property type="term" value="F:GTPase activity"/>
    <property type="evidence" value="ECO:0000314"/>
    <property type="project" value="MTBBASE"/>
</dbReference>
<dbReference type="GO" id="GO:0016151">
    <property type="term" value="F:nickel cation binding"/>
    <property type="evidence" value="ECO:0007669"/>
    <property type="project" value="UniProtKB-UniRule"/>
</dbReference>
<dbReference type="GO" id="GO:0043419">
    <property type="term" value="P:urea catabolic process"/>
    <property type="evidence" value="ECO:0007669"/>
    <property type="project" value="InterPro"/>
</dbReference>
<dbReference type="CDD" id="cd05540">
    <property type="entry name" value="UreG"/>
    <property type="match status" value="1"/>
</dbReference>
<dbReference type="FunFam" id="3.40.50.300:FF:000208">
    <property type="entry name" value="Urease accessory protein UreG"/>
    <property type="match status" value="1"/>
</dbReference>
<dbReference type="Gene3D" id="3.40.50.300">
    <property type="entry name" value="P-loop containing nucleotide triphosphate hydrolases"/>
    <property type="match status" value="1"/>
</dbReference>
<dbReference type="HAMAP" id="MF_01389">
    <property type="entry name" value="UreG"/>
    <property type="match status" value="1"/>
</dbReference>
<dbReference type="InterPro" id="IPR003495">
    <property type="entry name" value="CobW/HypB/UreG_nucleotide-bd"/>
</dbReference>
<dbReference type="InterPro" id="IPR027417">
    <property type="entry name" value="P-loop_NTPase"/>
</dbReference>
<dbReference type="InterPro" id="IPR004400">
    <property type="entry name" value="UreG"/>
</dbReference>
<dbReference type="NCBIfam" id="TIGR00101">
    <property type="entry name" value="ureG"/>
    <property type="match status" value="1"/>
</dbReference>
<dbReference type="PANTHER" id="PTHR31715">
    <property type="entry name" value="UREASE ACCESSORY PROTEIN G"/>
    <property type="match status" value="1"/>
</dbReference>
<dbReference type="PANTHER" id="PTHR31715:SF0">
    <property type="entry name" value="UREASE ACCESSORY PROTEIN G"/>
    <property type="match status" value="1"/>
</dbReference>
<dbReference type="Pfam" id="PF02492">
    <property type="entry name" value="cobW"/>
    <property type="match status" value="1"/>
</dbReference>
<dbReference type="PIRSF" id="PIRSF005624">
    <property type="entry name" value="Ni-bind_GTPase"/>
    <property type="match status" value="1"/>
</dbReference>
<dbReference type="SUPFAM" id="SSF52540">
    <property type="entry name" value="P-loop containing nucleoside triphosphate hydrolases"/>
    <property type="match status" value="1"/>
</dbReference>
<protein>
    <recommendedName>
        <fullName evidence="3">Urease accessory protein UreG</fullName>
    </recommendedName>
</protein>
<proteinExistence type="evidence at protein level"/>
<feature type="chain" id="PRO_0000067669" description="Urease accessory protein UreG">
    <location>
        <begin position="1"/>
        <end position="224"/>
    </location>
</feature>
<feature type="region of interest" description="Disordered" evidence="4">
    <location>
        <begin position="1"/>
        <end position="25"/>
    </location>
</feature>
<feature type="compositionally biased region" description="Basic residues" evidence="4">
    <location>
        <begin position="1"/>
        <end position="20"/>
    </location>
</feature>
<feature type="binding site" evidence="3">
    <location>
        <begin position="32"/>
        <end position="39"/>
    </location>
    <ligand>
        <name>GTP</name>
        <dbReference type="ChEBI" id="CHEBI:37565"/>
    </ligand>
</feature>
<feature type="disulfide bond" description="Interchain" evidence="2">
    <location>
        <position position="90"/>
    </location>
</feature>
<sequence length="224" mass="23348">MATHSHPHSHTVPARPRRVRKPGEPLRIGVGGPVGSGKTALVAALCRQLRGELSLAVLTNDIYTTEDADFLRTHAVLPDDRIAAVQTGGCPHTAIRDDITANLDAIDELMAAHDALDLILVESGGDNLTATFSSGLVDAQIFVIDVAGGDKVPRKGGPGVTYSDLLVVNKTDLAALVGADLAVMARDADAVRDGRPTVLQSLTEDPAASDVVAWVRSQLAADGV</sequence>
<evidence type="ECO:0000250" key="1"/>
<evidence type="ECO:0000255" key="2"/>
<evidence type="ECO:0000255" key="3">
    <source>
        <dbReference type="HAMAP-Rule" id="MF_01389"/>
    </source>
</evidence>
<evidence type="ECO:0000256" key="4">
    <source>
        <dbReference type="SAM" id="MobiDB-lite"/>
    </source>
</evidence>
<evidence type="ECO:0000305" key="5"/>
<organism>
    <name type="scientific">Mycobacterium tuberculosis (strain ATCC 25618 / H37Rv)</name>
    <dbReference type="NCBI Taxonomy" id="83332"/>
    <lineage>
        <taxon>Bacteria</taxon>
        <taxon>Bacillati</taxon>
        <taxon>Actinomycetota</taxon>
        <taxon>Actinomycetes</taxon>
        <taxon>Mycobacteriales</taxon>
        <taxon>Mycobacteriaceae</taxon>
        <taxon>Mycobacterium</taxon>
        <taxon>Mycobacterium tuberculosis complex</taxon>
    </lineage>
</organism>